<gene>
    <name type="primary">Segment-10</name>
</gene>
<organismHost>
    <name type="scientific">Camelus dromedarius</name>
    <name type="common">Dromedary</name>
    <name type="synonym">Arabian camel</name>
    <dbReference type="NCBI Taxonomy" id="9838"/>
</organismHost>
<organismHost>
    <name type="scientific">Canis lupus familiaris</name>
    <name type="common">Dog</name>
    <name type="synonym">Canis familiaris</name>
    <dbReference type="NCBI Taxonomy" id="9615"/>
</organismHost>
<organismHost>
    <name type="scientific">Equus asinus</name>
    <name type="common">Donkey</name>
    <name type="synonym">Equus africanus asinus</name>
    <dbReference type="NCBI Taxonomy" id="9793"/>
</organismHost>
<organismHost>
    <name type="scientific">Equus caballus</name>
    <name type="common">Horse</name>
    <dbReference type="NCBI Taxonomy" id="9796"/>
</organismHost>
<organismHost>
    <name type="scientific">Equus hemionus</name>
    <name type="common">Onager</name>
    <name type="synonym">Asian wild ass</name>
    <dbReference type="NCBI Taxonomy" id="9794"/>
</organismHost>
<organismHost>
    <name type="scientific">Equus quagga burchellii</name>
    <name type="common">Burchell's zebra</name>
    <name type="synonym">Equus burchelli</name>
    <dbReference type="NCBI Taxonomy" id="89252"/>
</organismHost>
<organismHost>
    <name type="scientific">Loxodonta africana</name>
    <name type="common">African elephant</name>
    <dbReference type="NCBI Taxonomy" id="9785"/>
</organismHost>
<proteinExistence type="inferred from homology"/>
<name>VNS3_AHSV4</name>
<dbReference type="EMBL" id="U02712">
    <property type="protein sequence ID" value="AAA21527.1"/>
    <property type="molecule type" value="Genomic_RNA"/>
</dbReference>
<dbReference type="InterPro" id="IPR002565">
    <property type="entry name" value="Orbi_NS3"/>
</dbReference>
<dbReference type="Pfam" id="PF01616">
    <property type="entry name" value="Orbi_NS3"/>
    <property type="match status" value="1"/>
</dbReference>
<evidence type="ECO:0000305" key="1"/>
<reference key="1">
    <citation type="journal article" date="1994" name="Virus Res.">
        <title>Phylogenetic analysis of segment 10 from African horsesickness virus and cognate genes from other orbiviruses.</title>
        <authorList>
            <person name="de Sa R."/>
            <person name="Zellner M."/>
            <person name="Grubman M.J."/>
        </authorList>
    </citation>
    <scope>NUCLEOTIDE SEQUENCE [GENOMIC RNA]</scope>
</reference>
<feature type="chain" id="PRO_0000040642" description="Non-structural protein NS3">
    <location>
        <begin position="1"/>
        <end position="217"/>
    </location>
</feature>
<feature type="chain" id="PRO_0000040643" description="Non-structural protein NS3A">
    <location>
        <begin position="12"/>
        <end position="217"/>
    </location>
</feature>
<protein>
    <recommendedName>
        <fullName>Non-structural protein NS3</fullName>
    </recommendedName>
    <component>
        <recommendedName>
            <fullName>Non-structural protein NS3A</fullName>
        </recommendedName>
    </component>
</protein>
<accession>Q64904</accession>
<organism>
    <name type="scientific">African horse sickness virus 4</name>
    <name type="common">AHSV-4</name>
    <dbReference type="NCBI Taxonomy" id="36421"/>
    <lineage>
        <taxon>Viruses</taxon>
        <taxon>Riboviria</taxon>
        <taxon>Orthornavirae</taxon>
        <taxon>Duplornaviricota</taxon>
        <taxon>Resentoviricetes</taxon>
        <taxon>Reovirales</taxon>
        <taxon>Sedoreoviridae</taxon>
        <taxon>Orbivirus</taxon>
        <taxon>African horse sickness virus</taxon>
    </lineage>
</organism>
<sequence>MNLAAIAKNYSMHNGESGAIVPYVPPPYNFASAPTFSQRTSQMESVSLGILNQAMSSTTGASGALKDEKAAFGAMAERLRDPEPIRQIKKQVGIRTLKNLKMELATMRRKKSALKITILISGCVTLATSMVGGLSIVDNEIFEDYKKNDWLMKAIHGLNLLCTTVLLAAGKISDKIQEEISRTKRDIAKRESYVSAASMSWNGDTEVLLQGIKYGDS</sequence>
<comment type="function">
    <text>May play a role in the release of virions from infected cells.</text>
</comment>
<comment type="similarity">
    <text evidence="1">Belongs to the orbivirus NS3 family.</text>
</comment>